<organism>
    <name type="scientific">Desulfotalea psychrophila (strain LSv54 / DSM 12343)</name>
    <dbReference type="NCBI Taxonomy" id="177439"/>
    <lineage>
        <taxon>Bacteria</taxon>
        <taxon>Pseudomonadati</taxon>
        <taxon>Thermodesulfobacteriota</taxon>
        <taxon>Desulfobulbia</taxon>
        <taxon>Desulfobulbales</taxon>
        <taxon>Desulfocapsaceae</taxon>
        <taxon>Desulfotalea</taxon>
    </lineage>
</organism>
<keyword id="KW-1185">Reference proteome</keyword>
<keyword id="KW-0687">Ribonucleoprotein</keyword>
<keyword id="KW-0689">Ribosomal protein</keyword>
<keyword id="KW-0694">RNA-binding</keyword>
<keyword id="KW-0699">rRNA-binding</keyword>
<reference key="1">
    <citation type="journal article" date="2004" name="Environ. Microbiol.">
        <title>The genome of Desulfotalea psychrophila, a sulfate-reducing bacterium from permanently cold Arctic sediments.</title>
        <authorList>
            <person name="Rabus R."/>
            <person name="Ruepp A."/>
            <person name="Frickey T."/>
            <person name="Rattei T."/>
            <person name="Fartmann B."/>
            <person name="Stark M."/>
            <person name="Bauer M."/>
            <person name="Zibat A."/>
            <person name="Lombardot T."/>
            <person name="Becker I."/>
            <person name="Amann J."/>
            <person name="Gellner K."/>
            <person name="Teeling H."/>
            <person name="Leuschner W.D."/>
            <person name="Gloeckner F.-O."/>
            <person name="Lupas A.N."/>
            <person name="Amann R."/>
            <person name="Klenk H.-P."/>
        </authorList>
    </citation>
    <scope>NUCLEOTIDE SEQUENCE [LARGE SCALE GENOMIC DNA]</scope>
    <source>
        <strain>DSM 12343 / LSv54</strain>
    </source>
</reference>
<dbReference type="EMBL" id="CR522870">
    <property type="protein sequence ID" value="CAG35859.1"/>
    <property type="molecule type" value="Genomic_DNA"/>
</dbReference>
<dbReference type="RefSeq" id="WP_011188373.1">
    <property type="nucleotide sequence ID" value="NC_006138.1"/>
</dbReference>
<dbReference type="SMR" id="Q6AP65"/>
<dbReference type="STRING" id="177439.DP1130"/>
<dbReference type="KEGG" id="dps:DP1130"/>
<dbReference type="eggNOG" id="COG0092">
    <property type="taxonomic scope" value="Bacteria"/>
</dbReference>
<dbReference type="HOGENOM" id="CLU_058591_0_2_7"/>
<dbReference type="OrthoDB" id="9806396at2"/>
<dbReference type="Proteomes" id="UP000000602">
    <property type="component" value="Chromosome"/>
</dbReference>
<dbReference type="GO" id="GO:0022627">
    <property type="term" value="C:cytosolic small ribosomal subunit"/>
    <property type="evidence" value="ECO:0007669"/>
    <property type="project" value="TreeGrafter"/>
</dbReference>
<dbReference type="GO" id="GO:0003729">
    <property type="term" value="F:mRNA binding"/>
    <property type="evidence" value="ECO:0007669"/>
    <property type="project" value="UniProtKB-UniRule"/>
</dbReference>
<dbReference type="GO" id="GO:0019843">
    <property type="term" value="F:rRNA binding"/>
    <property type="evidence" value="ECO:0007669"/>
    <property type="project" value="UniProtKB-UniRule"/>
</dbReference>
<dbReference type="GO" id="GO:0003735">
    <property type="term" value="F:structural constituent of ribosome"/>
    <property type="evidence" value="ECO:0007669"/>
    <property type="project" value="InterPro"/>
</dbReference>
<dbReference type="GO" id="GO:0006412">
    <property type="term" value="P:translation"/>
    <property type="evidence" value="ECO:0007669"/>
    <property type="project" value="UniProtKB-UniRule"/>
</dbReference>
<dbReference type="CDD" id="cd02412">
    <property type="entry name" value="KH-II_30S_S3"/>
    <property type="match status" value="1"/>
</dbReference>
<dbReference type="FunFam" id="3.30.1140.32:FF:000002">
    <property type="entry name" value="30S ribosomal protein S3"/>
    <property type="match status" value="1"/>
</dbReference>
<dbReference type="FunFam" id="3.30.300.20:FF:000001">
    <property type="entry name" value="30S ribosomal protein S3"/>
    <property type="match status" value="1"/>
</dbReference>
<dbReference type="Gene3D" id="3.30.300.20">
    <property type="match status" value="1"/>
</dbReference>
<dbReference type="Gene3D" id="3.30.1140.32">
    <property type="entry name" value="Ribosomal protein S3, C-terminal domain"/>
    <property type="match status" value="1"/>
</dbReference>
<dbReference type="HAMAP" id="MF_01309_B">
    <property type="entry name" value="Ribosomal_uS3_B"/>
    <property type="match status" value="1"/>
</dbReference>
<dbReference type="InterPro" id="IPR004087">
    <property type="entry name" value="KH_dom"/>
</dbReference>
<dbReference type="InterPro" id="IPR015946">
    <property type="entry name" value="KH_dom-like_a/b"/>
</dbReference>
<dbReference type="InterPro" id="IPR004044">
    <property type="entry name" value="KH_dom_type_2"/>
</dbReference>
<dbReference type="InterPro" id="IPR009019">
    <property type="entry name" value="KH_sf_prok-type"/>
</dbReference>
<dbReference type="InterPro" id="IPR036419">
    <property type="entry name" value="Ribosomal_S3_C_sf"/>
</dbReference>
<dbReference type="InterPro" id="IPR005704">
    <property type="entry name" value="Ribosomal_uS3_bac-typ"/>
</dbReference>
<dbReference type="InterPro" id="IPR001351">
    <property type="entry name" value="Ribosomal_uS3_C"/>
</dbReference>
<dbReference type="InterPro" id="IPR018280">
    <property type="entry name" value="Ribosomal_uS3_CS"/>
</dbReference>
<dbReference type="NCBIfam" id="TIGR01009">
    <property type="entry name" value="rpsC_bact"/>
    <property type="match status" value="1"/>
</dbReference>
<dbReference type="PANTHER" id="PTHR11760">
    <property type="entry name" value="30S/40S RIBOSOMAL PROTEIN S3"/>
    <property type="match status" value="1"/>
</dbReference>
<dbReference type="PANTHER" id="PTHR11760:SF19">
    <property type="entry name" value="SMALL RIBOSOMAL SUBUNIT PROTEIN US3C"/>
    <property type="match status" value="1"/>
</dbReference>
<dbReference type="Pfam" id="PF07650">
    <property type="entry name" value="KH_2"/>
    <property type="match status" value="1"/>
</dbReference>
<dbReference type="Pfam" id="PF00189">
    <property type="entry name" value="Ribosomal_S3_C"/>
    <property type="match status" value="1"/>
</dbReference>
<dbReference type="SMART" id="SM00322">
    <property type="entry name" value="KH"/>
    <property type="match status" value="1"/>
</dbReference>
<dbReference type="SUPFAM" id="SSF54814">
    <property type="entry name" value="Prokaryotic type KH domain (KH-domain type II)"/>
    <property type="match status" value="1"/>
</dbReference>
<dbReference type="SUPFAM" id="SSF54821">
    <property type="entry name" value="Ribosomal protein S3 C-terminal domain"/>
    <property type="match status" value="1"/>
</dbReference>
<dbReference type="PROSITE" id="PS50823">
    <property type="entry name" value="KH_TYPE_2"/>
    <property type="match status" value="1"/>
</dbReference>
<dbReference type="PROSITE" id="PS00548">
    <property type="entry name" value="RIBOSOMAL_S3"/>
    <property type="match status" value="1"/>
</dbReference>
<sequence length="217" mass="24430">MGQKVNPLGIRLNITRTWDSVWYADKDYSTFLIEDQKIRKFLKKRLSHAGLSSVKIERTGEQVRIKLFTARPGIVIGKKGAEIEILKRELEKLVSRKVTLDIQEVRRPEADAQLVADNIAQQLARRVAFRRAMKKAVSSALRFGVQGIKIACSGRLGGAEMSRCEWVREGRVPLHTLRADVDYALSESHTTYGIIGVKVWIFKGEVLSDKDKGAVAQ</sequence>
<feature type="chain" id="PRO_0000130111" description="Small ribosomal subunit protein uS3">
    <location>
        <begin position="1"/>
        <end position="217"/>
    </location>
</feature>
<feature type="domain" description="KH type-2" evidence="1">
    <location>
        <begin position="38"/>
        <end position="106"/>
    </location>
</feature>
<proteinExistence type="inferred from homology"/>
<accession>Q6AP65</accession>
<name>RS3_DESPS</name>
<gene>
    <name evidence="1" type="primary">rpsC</name>
    <name type="ordered locus">DP1130</name>
</gene>
<comment type="function">
    <text evidence="1">Binds the lower part of the 30S subunit head. Binds mRNA in the 70S ribosome, positioning it for translation.</text>
</comment>
<comment type="subunit">
    <text evidence="1">Part of the 30S ribosomal subunit. Forms a tight complex with proteins S10 and S14.</text>
</comment>
<comment type="similarity">
    <text evidence="1">Belongs to the universal ribosomal protein uS3 family.</text>
</comment>
<protein>
    <recommendedName>
        <fullName evidence="1">Small ribosomal subunit protein uS3</fullName>
    </recommendedName>
    <alternativeName>
        <fullName evidence="2">30S ribosomal protein S3</fullName>
    </alternativeName>
</protein>
<evidence type="ECO:0000255" key="1">
    <source>
        <dbReference type="HAMAP-Rule" id="MF_01309"/>
    </source>
</evidence>
<evidence type="ECO:0000305" key="2"/>